<evidence type="ECO:0000255" key="1">
    <source>
        <dbReference type="HAMAP-Rule" id="MF_00191"/>
    </source>
</evidence>
<reference key="1">
    <citation type="journal article" date="2003" name="Nature">
        <title>The genome of a motile marine Synechococcus.</title>
        <authorList>
            <person name="Palenik B."/>
            <person name="Brahamsha B."/>
            <person name="Larimer F.W."/>
            <person name="Land M.L."/>
            <person name="Hauser L."/>
            <person name="Chain P."/>
            <person name="Lamerdin J.E."/>
            <person name="Regala W."/>
            <person name="Allen E.E."/>
            <person name="McCarren J."/>
            <person name="Paulsen I.T."/>
            <person name="Dufresne A."/>
            <person name="Partensky F."/>
            <person name="Webb E.A."/>
            <person name="Waterbury J."/>
        </authorList>
    </citation>
    <scope>NUCLEOTIDE SEQUENCE [LARGE SCALE GENOMIC DNA]</scope>
    <source>
        <strain>WH8102</strain>
    </source>
</reference>
<proteinExistence type="inferred from homology"/>
<keyword id="KW-0004">4Fe-4S</keyword>
<keyword id="KW-0408">Iron</keyword>
<keyword id="KW-0411">Iron-sulfur</keyword>
<keyword id="KW-0414">Isoprene biosynthesis</keyword>
<keyword id="KW-0479">Metal-binding</keyword>
<keyword id="KW-0560">Oxidoreductase</keyword>
<accession>Q7U9K4</accession>
<protein>
    <recommendedName>
        <fullName evidence="1">4-hydroxy-3-methylbut-2-enyl diphosphate reductase</fullName>
        <shortName evidence="1">HMBPP reductase</shortName>
        <ecNumber evidence="1">1.17.7.4</ecNumber>
    </recommendedName>
</protein>
<name>ISPH_PARMW</name>
<comment type="function">
    <text evidence="1">Catalyzes the conversion of 1-hydroxy-2-methyl-2-(E)-butenyl 4-diphosphate (HMBPP) into a mixture of isopentenyl diphosphate (IPP) and dimethylallyl diphosphate (DMAPP). Acts in the terminal step of the DOXP/MEP pathway for isoprenoid precursor biosynthesis.</text>
</comment>
<comment type="catalytic activity">
    <reaction evidence="1">
        <text>isopentenyl diphosphate + 2 oxidized [2Fe-2S]-[ferredoxin] + H2O = (2E)-4-hydroxy-3-methylbut-2-enyl diphosphate + 2 reduced [2Fe-2S]-[ferredoxin] + 2 H(+)</text>
        <dbReference type="Rhea" id="RHEA:24488"/>
        <dbReference type="Rhea" id="RHEA-COMP:10000"/>
        <dbReference type="Rhea" id="RHEA-COMP:10001"/>
        <dbReference type="ChEBI" id="CHEBI:15377"/>
        <dbReference type="ChEBI" id="CHEBI:15378"/>
        <dbReference type="ChEBI" id="CHEBI:33737"/>
        <dbReference type="ChEBI" id="CHEBI:33738"/>
        <dbReference type="ChEBI" id="CHEBI:128753"/>
        <dbReference type="ChEBI" id="CHEBI:128769"/>
        <dbReference type="EC" id="1.17.7.4"/>
    </reaction>
</comment>
<comment type="catalytic activity">
    <reaction evidence="1">
        <text>dimethylallyl diphosphate + 2 oxidized [2Fe-2S]-[ferredoxin] + H2O = (2E)-4-hydroxy-3-methylbut-2-enyl diphosphate + 2 reduced [2Fe-2S]-[ferredoxin] + 2 H(+)</text>
        <dbReference type="Rhea" id="RHEA:24825"/>
        <dbReference type="Rhea" id="RHEA-COMP:10000"/>
        <dbReference type="Rhea" id="RHEA-COMP:10001"/>
        <dbReference type="ChEBI" id="CHEBI:15377"/>
        <dbReference type="ChEBI" id="CHEBI:15378"/>
        <dbReference type="ChEBI" id="CHEBI:33737"/>
        <dbReference type="ChEBI" id="CHEBI:33738"/>
        <dbReference type="ChEBI" id="CHEBI:57623"/>
        <dbReference type="ChEBI" id="CHEBI:128753"/>
        <dbReference type="EC" id="1.17.7.4"/>
    </reaction>
</comment>
<comment type="cofactor">
    <cofactor evidence="1">
        <name>[4Fe-4S] cluster</name>
        <dbReference type="ChEBI" id="CHEBI:49883"/>
    </cofactor>
    <text evidence="1">Binds 1 [4Fe-4S] cluster per subunit.</text>
</comment>
<comment type="pathway">
    <text evidence="1">Isoprenoid biosynthesis; dimethylallyl diphosphate biosynthesis; dimethylallyl diphosphate from (2E)-4-hydroxy-3-methylbutenyl diphosphate: step 1/1.</text>
</comment>
<comment type="pathway">
    <text evidence="1">Isoprenoid biosynthesis; isopentenyl diphosphate biosynthesis via DXP pathway; isopentenyl diphosphate from 1-deoxy-D-xylulose 5-phosphate: step 6/6.</text>
</comment>
<comment type="similarity">
    <text evidence="1">Belongs to the IspH family.</text>
</comment>
<gene>
    <name evidence="1" type="primary">ispH</name>
    <name type="synonym">lytB</name>
    <name type="ordered locus">SYNW0252</name>
</gene>
<dbReference type="EC" id="1.17.7.4" evidence="1"/>
<dbReference type="EMBL" id="BX569689">
    <property type="protein sequence ID" value="CAE06767.1"/>
    <property type="molecule type" value="Genomic_DNA"/>
</dbReference>
<dbReference type="RefSeq" id="WP_011127128.1">
    <property type="nucleotide sequence ID" value="NC_005070.1"/>
</dbReference>
<dbReference type="SMR" id="Q7U9K4"/>
<dbReference type="STRING" id="84588.SYNW0252"/>
<dbReference type="KEGG" id="syw:SYNW0252"/>
<dbReference type="eggNOG" id="COG0761">
    <property type="taxonomic scope" value="Bacteria"/>
</dbReference>
<dbReference type="HOGENOM" id="CLU_027486_4_0_3"/>
<dbReference type="UniPathway" id="UPA00056">
    <property type="reaction ID" value="UER00097"/>
</dbReference>
<dbReference type="UniPathway" id="UPA00059">
    <property type="reaction ID" value="UER00105"/>
</dbReference>
<dbReference type="Proteomes" id="UP000001422">
    <property type="component" value="Chromosome"/>
</dbReference>
<dbReference type="GO" id="GO:0051539">
    <property type="term" value="F:4 iron, 4 sulfur cluster binding"/>
    <property type="evidence" value="ECO:0007669"/>
    <property type="project" value="UniProtKB-UniRule"/>
</dbReference>
<dbReference type="GO" id="GO:0051745">
    <property type="term" value="F:4-hydroxy-3-methylbut-2-enyl diphosphate reductase activity"/>
    <property type="evidence" value="ECO:0007669"/>
    <property type="project" value="UniProtKB-UniRule"/>
</dbReference>
<dbReference type="GO" id="GO:0046872">
    <property type="term" value="F:metal ion binding"/>
    <property type="evidence" value="ECO:0007669"/>
    <property type="project" value="UniProtKB-KW"/>
</dbReference>
<dbReference type="GO" id="GO:0050992">
    <property type="term" value="P:dimethylallyl diphosphate biosynthetic process"/>
    <property type="evidence" value="ECO:0007669"/>
    <property type="project" value="UniProtKB-UniRule"/>
</dbReference>
<dbReference type="GO" id="GO:0019288">
    <property type="term" value="P:isopentenyl diphosphate biosynthetic process, methylerythritol 4-phosphate pathway"/>
    <property type="evidence" value="ECO:0007669"/>
    <property type="project" value="UniProtKB-UniRule"/>
</dbReference>
<dbReference type="GO" id="GO:0016114">
    <property type="term" value="P:terpenoid biosynthetic process"/>
    <property type="evidence" value="ECO:0007669"/>
    <property type="project" value="UniProtKB-UniRule"/>
</dbReference>
<dbReference type="CDD" id="cd13944">
    <property type="entry name" value="lytB_ispH"/>
    <property type="match status" value="1"/>
</dbReference>
<dbReference type="Gene3D" id="3.40.50.11270">
    <property type="match status" value="1"/>
</dbReference>
<dbReference type="Gene3D" id="3.40.1010.20">
    <property type="entry name" value="4-hydroxy-3-methylbut-2-enyl diphosphate reductase, catalytic domain"/>
    <property type="match status" value="2"/>
</dbReference>
<dbReference type="HAMAP" id="MF_00191">
    <property type="entry name" value="IspH"/>
    <property type="match status" value="1"/>
</dbReference>
<dbReference type="InterPro" id="IPR003451">
    <property type="entry name" value="LytB/IspH"/>
</dbReference>
<dbReference type="NCBIfam" id="TIGR00216">
    <property type="entry name" value="ispH_lytB"/>
    <property type="match status" value="1"/>
</dbReference>
<dbReference type="NCBIfam" id="NF009911">
    <property type="entry name" value="PRK13371.1"/>
    <property type="match status" value="1"/>
</dbReference>
<dbReference type="PANTHER" id="PTHR31619">
    <property type="entry name" value="4-HYDROXY-3-METHYLBUT-2-ENYL DIPHOSPHATE REDUCTASE, CHLOROPLASTIC"/>
    <property type="match status" value="1"/>
</dbReference>
<dbReference type="PANTHER" id="PTHR31619:SF5">
    <property type="entry name" value="4-HYDROXY-3-METHYLBUT-2-ENYL DIPHOSPHATE REDUCTASE, CHLOROPLASTIC"/>
    <property type="match status" value="1"/>
</dbReference>
<dbReference type="Pfam" id="PF02401">
    <property type="entry name" value="LYTB"/>
    <property type="match status" value="1"/>
</dbReference>
<feature type="chain" id="PRO_0000128879" description="4-hydroxy-3-methylbut-2-enyl diphosphate reductase">
    <location>
        <begin position="1"/>
        <end position="399"/>
    </location>
</feature>
<feature type="active site" description="Proton donor" evidence="1">
    <location>
        <position position="187"/>
    </location>
</feature>
<feature type="binding site" evidence="1">
    <location>
        <position position="66"/>
    </location>
    <ligand>
        <name>[4Fe-4S] cluster</name>
        <dbReference type="ChEBI" id="CHEBI:49883"/>
    </ligand>
</feature>
<feature type="binding site" evidence="1">
    <location>
        <position position="96"/>
    </location>
    <ligand>
        <name>(2E)-4-hydroxy-3-methylbut-2-enyl diphosphate</name>
        <dbReference type="ChEBI" id="CHEBI:128753"/>
    </ligand>
</feature>
<feature type="binding site" evidence="1">
    <location>
        <position position="96"/>
    </location>
    <ligand>
        <name>dimethylallyl diphosphate</name>
        <dbReference type="ChEBI" id="CHEBI:57623"/>
    </ligand>
</feature>
<feature type="binding site" evidence="1">
    <location>
        <position position="96"/>
    </location>
    <ligand>
        <name>isopentenyl diphosphate</name>
        <dbReference type="ChEBI" id="CHEBI:128769"/>
    </ligand>
</feature>
<feature type="binding site" evidence="1">
    <location>
        <position position="157"/>
    </location>
    <ligand>
        <name>[4Fe-4S] cluster</name>
        <dbReference type="ChEBI" id="CHEBI:49883"/>
    </ligand>
</feature>
<feature type="binding site" evidence="1">
    <location>
        <position position="185"/>
    </location>
    <ligand>
        <name>(2E)-4-hydroxy-3-methylbut-2-enyl diphosphate</name>
        <dbReference type="ChEBI" id="CHEBI:128753"/>
    </ligand>
</feature>
<feature type="binding site" evidence="1">
    <location>
        <position position="185"/>
    </location>
    <ligand>
        <name>dimethylallyl diphosphate</name>
        <dbReference type="ChEBI" id="CHEBI:57623"/>
    </ligand>
</feature>
<feature type="binding site" evidence="1">
    <location>
        <position position="185"/>
    </location>
    <ligand>
        <name>isopentenyl diphosphate</name>
        <dbReference type="ChEBI" id="CHEBI:128769"/>
    </ligand>
</feature>
<feature type="binding site" evidence="1">
    <location>
        <position position="250"/>
    </location>
    <ligand>
        <name>(2E)-4-hydroxy-3-methylbut-2-enyl diphosphate</name>
        <dbReference type="ChEBI" id="CHEBI:128753"/>
    </ligand>
</feature>
<feature type="binding site" evidence="1">
    <location>
        <position position="288"/>
    </location>
    <ligand>
        <name>[4Fe-4S] cluster</name>
        <dbReference type="ChEBI" id="CHEBI:49883"/>
    </ligand>
</feature>
<feature type="binding site" evidence="1">
    <location>
        <position position="317"/>
    </location>
    <ligand>
        <name>(2E)-4-hydroxy-3-methylbut-2-enyl diphosphate</name>
        <dbReference type="ChEBI" id="CHEBI:128753"/>
    </ligand>
</feature>
<feature type="binding site" evidence="1">
    <location>
        <position position="317"/>
    </location>
    <ligand>
        <name>dimethylallyl diphosphate</name>
        <dbReference type="ChEBI" id="CHEBI:57623"/>
    </ligand>
</feature>
<feature type="binding site" evidence="1">
    <location>
        <position position="317"/>
    </location>
    <ligand>
        <name>isopentenyl diphosphate</name>
        <dbReference type="ChEBI" id="CHEBI:128769"/>
    </ligand>
</feature>
<feature type="binding site" evidence="1">
    <location>
        <position position="318"/>
    </location>
    <ligand>
        <name>(2E)-4-hydroxy-3-methylbut-2-enyl diphosphate</name>
        <dbReference type="ChEBI" id="CHEBI:128753"/>
    </ligand>
</feature>
<feature type="binding site" evidence="1">
    <location>
        <position position="318"/>
    </location>
    <ligand>
        <name>dimethylallyl diphosphate</name>
        <dbReference type="ChEBI" id="CHEBI:57623"/>
    </ligand>
</feature>
<feature type="binding site" evidence="1">
    <location>
        <position position="318"/>
    </location>
    <ligand>
        <name>isopentenyl diphosphate</name>
        <dbReference type="ChEBI" id="CHEBI:128769"/>
    </ligand>
</feature>
<feature type="binding site" evidence="1">
    <location>
        <position position="319"/>
    </location>
    <ligand>
        <name>(2E)-4-hydroxy-3-methylbut-2-enyl diphosphate</name>
        <dbReference type="ChEBI" id="CHEBI:128753"/>
    </ligand>
</feature>
<feature type="binding site" evidence="1">
    <location>
        <position position="319"/>
    </location>
    <ligand>
        <name>dimethylallyl diphosphate</name>
        <dbReference type="ChEBI" id="CHEBI:57623"/>
    </ligand>
</feature>
<feature type="binding site" evidence="1">
    <location>
        <position position="319"/>
    </location>
    <ligand>
        <name>isopentenyl diphosphate</name>
        <dbReference type="ChEBI" id="CHEBI:128769"/>
    </ligand>
</feature>
<feature type="binding site" evidence="1">
    <location>
        <position position="380"/>
    </location>
    <ligand>
        <name>(2E)-4-hydroxy-3-methylbut-2-enyl diphosphate</name>
        <dbReference type="ChEBI" id="CHEBI:128753"/>
    </ligand>
</feature>
<feature type="binding site" evidence="1">
    <location>
        <position position="380"/>
    </location>
    <ligand>
        <name>dimethylallyl diphosphate</name>
        <dbReference type="ChEBI" id="CHEBI:57623"/>
    </ligand>
</feature>
<feature type="binding site" evidence="1">
    <location>
        <position position="380"/>
    </location>
    <ligand>
        <name>isopentenyl diphosphate</name>
        <dbReference type="ChEBI" id="CHEBI:128769"/>
    </ligand>
</feature>
<sequence>MDTHAFKRSLHHSERYNRRGFGRAEEVAESLEQAYQSGLIGTIRDNGYKLSHGRLTVRLAEAFGFCWGVERAVAMAYETRKHYPAERLWITNEIIHNPSVNDHLREMDVQFIPVEQGVKDFSGVTSGDVVILPAFGATVQEMQLLNERGCHIVDTTCPWVSKVWTTVEKHKKHTITSIIHGKVKHEETLATSSFAGTYLVVLDMEEAQIVADYILGKGDRDAFMQRFSAACSPGFDPDRDLSRLGVANQTTMLKSETEEIGRLFERTMLSKYGPAELNDHFVAFNTICDATQERQDAMFSLVDEPLDLMVVIGGFNSSNTTHLQEIALSRGIRSFHIDTPDRLDAQANAIEHKPLNENLRLESNFLPAGPVTVGITSGASTPDRAVEEVIEKLMLLSES</sequence>
<organism>
    <name type="scientific">Parasynechococcus marenigrum (strain WH8102)</name>
    <dbReference type="NCBI Taxonomy" id="84588"/>
    <lineage>
        <taxon>Bacteria</taxon>
        <taxon>Bacillati</taxon>
        <taxon>Cyanobacteriota</taxon>
        <taxon>Cyanophyceae</taxon>
        <taxon>Synechococcales</taxon>
        <taxon>Prochlorococcaceae</taxon>
        <taxon>Parasynechococcus</taxon>
        <taxon>Parasynechococcus marenigrum</taxon>
    </lineage>
</organism>